<sequence length="135" mass="14610">MPTIQQLIRSGRSIKASKTASPALEKCPQKRGVCTRVYTTTPKKPNSALRKVARVRLSNKIEVTAYIPGEGHNLQEHSIVLIRGGRVKDLPGVRYHIVRGSLDTSGVADRKQSRSKYGAKQPKAGAAAPAKGKGR</sequence>
<evidence type="ECO:0000250" key="1"/>
<evidence type="ECO:0000255" key="2">
    <source>
        <dbReference type="HAMAP-Rule" id="MF_00403"/>
    </source>
</evidence>
<evidence type="ECO:0000256" key="3">
    <source>
        <dbReference type="SAM" id="MobiDB-lite"/>
    </source>
</evidence>
<evidence type="ECO:0000305" key="4"/>
<name>RS12_CHLL2</name>
<protein>
    <recommendedName>
        <fullName evidence="2">Small ribosomal subunit protein uS12</fullName>
    </recommendedName>
    <alternativeName>
        <fullName evidence="4">30S ribosomal protein S12</fullName>
    </alternativeName>
</protein>
<organism>
    <name type="scientific">Chlorobium limicola (strain DSM 245 / NBRC 103803 / 6330)</name>
    <dbReference type="NCBI Taxonomy" id="290315"/>
    <lineage>
        <taxon>Bacteria</taxon>
        <taxon>Pseudomonadati</taxon>
        <taxon>Chlorobiota</taxon>
        <taxon>Chlorobiia</taxon>
        <taxon>Chlorobiales</taxon>
        <taxon>Chlorobiaceae</taxon>
        <taxon>Chlorobium/Pelodictyon group</taxon>
        <taxon>Chlorobium</taxon>
    </lineage>
</organism>
<dbReference type="EMBL" id="CP001097">
    <property type="protein sequence ID" value="ACD91258.1"/>
    <property type="molecule type" value="Genomic_DNA"/>
</dbReference>
<dbReference type="RefSeq" id="WP_012467125.1">
    <property type="nucleotide sequence ID" value="NC_010803.1"/>
</dbReference>
<dbReference type="SMR" id="B3EH96"/>
<dbReference type="STRING" id="290315.Clim_2234"/>
<dbReference type="KEGG" id="cli:Clim_2234"/>
<dbReference type="eggNOG" id="COG0048">
    <property type="taxonomic scope" value="Bacteria"/>
</dbReference>
<dbReference type="HOGENOM" id="CLU_104295_1_2_10"/>
<dbReference type="OrthoDB" id="9802366at2"/>
<dbReference type="Proteomes" id="UP000008841">
    <property type="component" value="Chromosome"/>
</dbReference>
<dbReference type="GO" id="GO:0015935">
    <property type="term" value="C:small ribosomal subunit"/>
    <property type="evidence" value="ECO:0007669"/>
    <property type="project" value="InterPro"/>
</dbReference>
<dbReference type="GO" id="GO:0019843">
    <property type="term" value="F:rRNA binding"/>
    <property type="evidence" value="ECO:0007669"/>
    <property type="project" value="UniProtKB-UniRule"/>
</dbReference>
<dbReference type="GO" id="GO:0003735">
    <property type="term" value="F:structural constituent of ribosome"/>
    <property type="evidence" value="ECO:0007669"/>
    <property type="project" value="InterPro"/>
</dbReference>
<dbReference type="GO" id="GO:0000049">
    <property type="term" value="F:tRNA binding"/>
    <property type="evidence" value="ECO:0007669"/>
    <property type="project" value="UniProtKB-UniRule"/>
</dbReference>
<dbReference type="GO" id="GO:0006412">
    <property type="term" value="P:translation"/>
    <property type="evidence" value="ECO:0007669"/>
    <property type="project" value="UniProtKB-UniRule"/>
</dbReference>
<dbReference type="CDD" id="cd03368">
    <property type="entry name" value="Ribosomal_S12"/>
    <property type="match status" value="1"/>
</dbReference>
<dbReference type="FunFam" id="2.40.50.140:FF:000001">
    <property type="entry name" value="30S ribosomal protein S12"/>
    <property type="match status" value="1"/>
</dbReference>
<dbReference type="Gene3D" id="2.40.50.140">
    <property type="entry name" value="Nucleic acid-binding proteins"/>
    <property type="match status" value="1"/>
</dbReference>
<dbReference type="HAMAP" id="MF_00403_B">
    <property type="entry name" value="Ribosomal_uS12_B"/>
    <property type="match status" value="1"/>
</dbReference>
<dbReference type="InterPro" id="IPR012340">
    <property type="entry name" value="NA-bd_OB-fold"/>
</dbReference>
<dbReference type="InterPro" id="IPR006032">
    <property type="entry name" value="Ribosomal_uS12"/>
</dbReference>
<dbReference type="InterPro" id="IPR005679">
    <property type="entry name" value="Ribosomal_uS12_bac"/>
</dbReference>
<dbReference type="NCBIfam" id="TIGR00981">
    <property type="entry name" value="rpsL_bact"/>
    <property type="match status" value="1"/>
</dbReference>
<dbReference type="PANTHER" id="PTHR11652">
    <property type="entry name" value="30S RIBOSOMAL PROTEIN S12 FAMILY MEMBER"/>
    <property type="match status" value="1"/>
</dbReference>
<dbReference type="Pfam" id="PF00164">
    <property type="entry name" value="Ribosom_S12_S23"/>
    <property type="match status" value="1"/>
</dbReference>
<dbReference type="PIRSF" id="PIRSF002133">
    <property type="entry name" value="Ribosomal_S12/S23"/>
    <property type="match status" value="1"/>
</dbReference>
<dbReference type="PRINTS" id="PR01034">
    <property type="entry name" value="RIBOSOMALS12"/>
</dbReference>
<dbReference type="SUPFAM" id="SSF50249">
    <property type="entry name" value="Nucleic acid-binding proteins"/>
    <property type="match status" value="1"/>
</dbReference>
<dbReference type="PROSITE" id="PS00055">
    <property type="entry name" value="RIBOSOMAL_S12"/>
    <property type="match status" value="1"/>
</dbReference>
<keyword id="KW-0488">Methylation</keyword>
<keyword id="KW-0687">Ribonucleoprotein</keyword>
<keyword id="KW-0689">Ribosomal protein</keyword>
<keyword id="KW-0694">RNA-binding</keyword>
<keyword id="KW-0699">rRNA-binding</keyword>
<keyword id="KW-0820">tRNA-binding</keyword>
<gene>
    <name evidence="2" type="primary">rpsL</name>
    <name type="ordered locus">Clim_2234</name>
</gene>
<accession>B3EH96</accession>
<comment type="function">
    <text evidence="2">With S4 and S5 plays an important role in translational accuracy.</text>
</comment>
<comment type="function">
    <text evidence="2">Interacts with and stabilizes bases of the 16S rRNA that are involved in tRNA selection in the A site and with the mRNA backbone. Located at the interface of the 30S and 50S subunits, it traverses the body of the 30S subunit contacting proteins on the other side and probably holding the rRNA structure together. The combined cluster of proteins S8, S12 and S17 appears to hold together the shoulder and platform of the 30S subunit.</text>
</comment>
<comment type="subunit">
    <text evidence="2">Part of the 30S ribosomal subunit. Contacts proteins S8 and S17. May interact with IF1 in the 30S initiation complex.</text>
</comment>
<comment type="similarity">
    <text evidence="2">Belongs to the universal ribosomal protein uS12 family.</text>
</comment>
<feature type="chain" id="PRO_1000194142" description="Small ribosomal subunit protein uS12">
    <location>
        <begin position="1"/>
        <end position="135"/>
    </location>
</feature>
<feature type="region of interest" description="Disordered" evidence="3">
    <location>
        <begin position="101"/>
        <end position="135"/>
    </location>
</feature>
<feature type="compositionally biased region" description="Low complexity" evidence="3">
    <location>
        <begin position="118"/>
        <end position="135"/>
    </location>
</feature>
<feature type="modified residue" description="3-methylthioaspartic acid" evidence="1">
    <location>
        <position position="89"/>
    </location>
</feature>
<proteinExistence type="inferred from homology"/>
<reference key="1">
    <citation type="submission" date="2008-05" db="EMBL/GenBank/DDBJ databases">
        <title>Complete sequence of Chlorobium limicola DSM 245.</title>
        <authorList>
            <consortium name="US DOE Joint Genome Institute"/>
            <person name="Lucas S."/>
            <person name="Copeland A."/>
            <person name="Lapidus A."/>
            <person name="Glavina del Rio T."/>
            <person name="Dalin E."/>
            <person name="Tice H."/>
            <person name="Bruce D."/>
            <person name="Goodwin L."/>
            <person name="Pitluck S."/>
            <person name="Schmutz J."/>
            <person name="Larimer F."/>
            <person name="Land M."/>
            <person name="Hauser L."/>
            <person name="Kyrpides N."/>
            <person name="Ovchinnikova G."/>
            <person name="Zhao F."/>
            <person name="Li T."/>
            <person name="Liu Z."/>
            <person name="Overmann J."/>
            <person name="Bryant D.A."/>
            <person name="Richardson P."/>
        </authorList>
    </citation>
    <scope>NUCLEOTIDE SEQUENCE [LARGE SCALE GENOMIC DNA]</scope>
    <source>
        <strain>DSM 245 / NBRC 103803 / 6330</strain>
    </source>
</reference>